<dbReference type="EC" id="2.4.1.222" evidence="2"/>
<dbReference type="EMBL" id="AB016486">
    <property type="protein sequence ID" value="BAA82742.1"/>
    <property type="molecule type" value="mRNA"/>
</dbReference>
<dbReference type="RefSeq" id="NP_068621.1">
    <property type="nucleotide sequence ID" value="NM_021849.2"/>
</dbReference>
<dbReference type="SMR" id="Q9R1U9"/>
<dbReference type="FunCoup" id="Q9R1U9">
    <property type="interactions" value="389"/>
</dbReference>
<dbReference type="STRING" id="10116.ENSRNOP00000067562"/>
<dbReference type="CAZy" id="GT31">
    <property type="family name" value="Glycosyltransferase Family 31"/>
</dbReference>
<dbReference type="GlyCosmos" id="Q9R1U9">
    <property type="glycosylation" value="1 site, No reported glycans"/>
</dbReference>
<dbReference type="GlyGen" id="Q9R1U9">
    <property type="glycosylation" value="1 site"/>
</dbReference>
<dbReference type="PhosphoSitePlus" id="Q9R1U9"/>
<dbReference type="PaxDb" id="10116-ENSRNOP00000067562"/>
<dbReference type="GeneID" id="60433"/>
<dbReference type="KEGG" id="rno:60433"/>
<dbReference type="AGR" id="RGD:621322"/>
<dbReference type="CTD" id="5986"/>
<dbReference type="RGD" id="621322">
    <property type="gene designation" value="Rfng"/>
</dbReference>
<dbReference type="eggNOG" id="ENOG502QV30">
    <property type="taxonomic scope" value="Eukaryota"/>
</dbReference>
<dbReference type="InParanoid" id="Q9R1U9"/>
<dbReference type="OrthoDB" id="8959630at2759"/>
<dbReference type="PhylomeDB" id="Q9R1U9"/>
<dbReference type="PRO" id="PR:Q9R1U9"/>
<dbReference type="Proteomes" id="UP000002494">
    <property type="component" value="Unplaced"/>
</dbReference>
<dbReference type="GO" id="GO:0000139">
    <property type="term" value="C:Golgi membrane"/>
    <property type="evidence" value="ECO:0007669"/>
    <property type="project" value="UniProtKB-SubCell"/>
</dbReference>
<dbReference type="GO" id="GO:0046872">
    <property type="term" value="F:metal ion binding"/>
    <property type="evidence" value="ECO:0007669"/>
    <property type="project" value="UniProtKB-KW"/>
</dbReference>
<dbReference type="GO" id="GO:0033829">
    <property type="term" value="F:O-fucosylpeptide 3-beta-N-acetylglucosaminyltransferase activity"/>
    <property type="evidence" value="ECO:0000250"/>
    <property type="project" value="UniProtKB"/>
</dbReference>
<dbReference type="GO" id="GO:0030154">
    <property type="term" value="P:cell differentiation"/>
    <property type="evidence" value="ECO:0007669"/>
    <property type="project" value="UniProtKB-KW"/>
</dbReference>
<dbReference type="GO" id="GO:0045746">
    <property type="term" value="P:negative regulation of Notch signaling pathway"/>
    <property type="evidence" value="ECO:0000315"/>
    <property type="project" value="RGD"/>
</dbReference>
<dbReference type="GO" id="GO:0007399">
    <property type="term" value="P:nervous system development"/>
    <property type="evidence" value="ECO:0007669"/>
    <property type="project" value="UniProtKB-KW"/>
</dbReference>
<dbReference type="GO" id="GO:0007389">
    <property type="term" value="P:pattern specification process"/>
    <property type="evidence" value="ECO:0007669"/>
    <property type="project" value="InterPro"/>
</dbReference>
<dbReference type="GO" id="GO:0045747">
    <property type="term" value="P:positive regulation of Notch signaling pathway"/>
    <property type="evidence" value="ECO:0000266"/>
    <property type="project" value="RGD"/>
</dbReference>
<dbReference type="GO" id="GO:0008593">
    <property type="term" value="P:regulation of Notch signaling pathway"/>
    <property type="evidence" value="ECO:0000250"/>
    <property type="project" value="UniProtKB"/>
</dbReference>
<dbReference type="FunFam" id="3.90.550.50:FF:000003">
    <property type="entry name" value="Beta-1,3-N-acetylglucosaminyltransferase"/>
    <property type="match status" value="1"/>
</dbReference>
<dbReference type="Gene3D" id="3.90.550.50">
    <property type="match status" value="1"/>
</dbReference>
<dbReference type="InterPro" id="IPR017374">
    <property type="entry name" value="Fringe"/>
</dbReference>
<dbReference type="InterPro" id="IPR003378">
    <property type="entry name" value="Fringe-like_glycosylTrfase"/>
</dbReference>
<dbReference type="PANTHER" id="PTHR10811">
    <property type="entry name" value="FRINGE-RELATED"/>
    <property type="match status" value="1"/>
</dbReference>
<dbReference type="Pfam" id="PF02434">
    <property type="entry name" value="Fringe"/>
    <property type="match status" value="1"/>
</dbReference>
<dbReference type="PIRSF" id="PIRSF038073">
    <property type="entry name" value="B-acetylgalactosaminyltfrase"/>
    <property type="match status" value="1"/>
</dbReference>
<keyword id="KW-0217">Developmental protein</keyword>
<keyword id="KW-0221">Differentiation</keyword>
<keyword id="KW-1015">Disulfide bond</keyword>
<keyword id="KW-0325">Glycoprotein</keyword>
<keyword id="KW-0328">Glycosyltransferase</keyword>
<keyword id="KW-0333">Golgi apparatus</keyword>
<keyword id="KW-0464">Manganese</keyword>
<keyword id="KW-0472">Membrane</keyword>
<keyword id="KW-0479">Metal-binding</keyword>
<keyword id="KW-0524">Neurogenesis</keyword>
<keyword id="KW-1185">Reference proteome</keyword>
<keyword id="KW-0735">Signal-anchor</keyword>
<keyword id="KW-0808">Transferase</keyword>
<keyword id="KW-0812">Transmembrane</keyword>
<keyword id="KW-1133">Transmembrane helix</keyword>
<accession>Q9R1U9</accession>
<comment type="function">
    <text evidence="2 3 5">Glycosyltransferase that initiates the elongation of O-linked fucose residues attached to EGF-like repeats in the extracellular domain of Notch molecules. Modulates NOTCH1 activity by modifying O-fucose residues at specific EGF-like domains resulting in enhancement of NOTCH1 activation by DLL1 and JAG1 (By similarity). Inhibits Notch signaling in postmitotic neurons of the brain. It may play a role in adult brain and in neurogenesis (PubMed:11165380). It may play a role in limb development (By similarity).</text>
</comment>
<comment type="catalytic activity">
    <reaction evidence="2">
        <text>3-O-(alpha-L-fucosyl)-L-threonyl-[EGF-like domain protein] + UDP-N-acetyl-alpha-D-glucosamine = 3-O-(N-acetyl-beta-D-glucosaminyl-(1-&gt;3)-alpha-L-fucosyl)-L-threonyl-[EGF-like domain protein] + UDP + H(+)</text>
        <dbReference type="Rhea" id="RHEA:70531"/>
        <dbReference type="Rhea" id="RHEA-COMP:17922"/>
        <dbReference type="Rhea" id="RHEA-COMP:17923"/>
        <dbReference type="ChEBI" id="CHEBI:15378"/>
        <dbReference type="ChEBI" id="CHEBI:57705"/>
        <dbReference type="ChEBI" id="CHEBI:58223"/>
        <dbReference type="ChEBI" id="CHEBI:189631"/>
        <dbReference type="ChEBI" id="CHEBI:189634"/>
        <dbReference type="EC" id="2.4.1.222"/>
    </reaction>
</comment>
<comment type="catalytic activity">
    <reaction evidence="2">
        <text>3-O-(alpha-L-fucosyl)-L-seryl-[EGF-like domain protein] + UDP-N-acetyl-alpha-D-glucosamine = 3-O-(N-acetyl-beta-D-glucosaminyl-(1-&gt;3)-alpha-L-fucosyl)-L-seryl-[EGF-like domain protein] + UDP + H(+)</text>
        <dbReference type="Rhea" id="RHEA:70511"/>
        <dbReference type="Rhea" id="RHEA-COMP:17919"/>
        <dbReference type="Rhea" id="RHEA-COMP:17920"/>
        <dbReference type="ChEBI" id="CHEBI:15378"/>
        <dbReference type="ChEBI" id="CHEBI:57705"/>
        <dbReference type="ChEBI" id="CHEBI:58223"/>
        <dbReference type="ChEBI" id="CHEBI:189632"/>
        <dbReference type="ChEBI" id="CHEBI:189633"/>
        <dbReference type="EC" id="2.4.1.222"/>
    </reaction>
</comment>
<comment type="cofactor">
    <cofactor evidence="2">
        <name>Mn(2+)</name>
        <dbReference type="ChEBI" id="CHEBI:29035"/>
    </cofactor>
    <text evidence="2">Has some activity with cobalt but not with magnesium, calcium and zinc.</text>
</comment>
<comment type="subcellular location">
    <subcellularLocation>
        <location evidence="6">Golgi apparatus membrane</location>
        <topology evidence="6">Single-pass type II membrane protein</topology>
    </subcellularLocation>
</comment>
<comment type="tissue specificity">
    <text evidence="5">Most abundantly expressed in adult brain. Expressed in most neurons of the brain but not in glial cells. Also detected to a lower extent in adult lung and kidney.</text>
</comment>
<comment type="similarity">
    <text evidence="6">Belongs to the glycosyltransferase 31 family.</text>
</comment>
<sequence>MSRVRRVLCRACLALAAVLAVLLLLPLPLPLPLPLPRAPAPDPGRVPTGSLTLEVSRLQPDDVFIAVKTTRKNHGPRLRLLLRTWISRAPRQTFIFTDGDDPELQLLAGSQMINTNCSAVRTRQALCCKMSVEYDKFIESGRKWFCHVDDDNYVNPKSLLHLLSTFSSNQDIYLGRPSLDHPIEATERVQGGGTSNTVKFWFATGGAGFCLSRGLALKMSPWASLGSFMSTAERVRLPDDCTVGYIVEGLLGARLLHSPLFHSHLENLQKLPSGAVLQQVTLSYGGPENPHNVVNVAGSFSIRQDPTRFQSVHCLLYPDTHWCPMKNRGKEAFQ</sequence>
<feature type="chain" id="PRO_0000219187" description="Beta-1,3-N-acetylglucosaminyltransferase radical fringe">
    <location>
        <begin position="1"/>
        <end position="334"/>
    </location>
</feature>
<feature type="topological domain" description="Cytoplasmic" evidence="4">
    <location>
        <begin position="1"/>
        <end position="6"/>
    </location>
</feature>
<feature type="transmembrane region" description="Helical; Signal-anchor for type II membrane protein" evidence="4">
    <location>
        <begin position="7"/>
        <end position="29"/>
    </location>
</feature>
<feature type="topological domain" description="Lumenal" evidence="4">
    <location>
        <begin position="30"/>
        <end position="334"/>
    </location>
</feature>
<feature type="active site" evidence="1">
    <location>
        <position position="240"/>
    </location>
</feature>
<feature type="binding site" evidence="1">
    <location>
        <position position="77"/>
    </location>
    <ligand>
        <name>substrate</name>
    </ligand>
</feature>
<feature type="binding site" evidence="1">
    <location>
        <position position="150"/>
    </location>
    <ligand>
        <name>substrate</name>
    </ligand>
</feature>
<feature type="binding site" evidence="1">
    <location>
        <position position="151"/>
    </location>
    <ligand>
        <name>Mn(2+)</name>
        <dbReference type="ChEBI" id="CHEBI:29035"/>
    </ligand>
</feature>
<feature type="binding site" evidence="1">
    <location>
        <position position="264"/>
    </location>
    <ligand>
        <name>Mn(2+)</name>
        <dbReference type="ChEBI" id="CHEBI:29035"/>
    </ligand>
</feature>
<feature type="glycosylation site" description="N-linked (GlcNAc...) asparagine" evidence="4">
    <location>
        <position position="116"/>
    </location>
</feature>
<feature type="disulfide bond" evidence="1">
    <location>
        <begin position="117"/>
        <end position="128"/>
    </location>
</feature>
<feature type="disulfide bond" evidence="1">
    <location>
        <begin position="146"/>
        <end position="210"/>
    </location>
</feature>
<feature type="disulfide bond" evidence="1">
    <location>
        <begin position="314"/>
        <end position="323"/>
    </location>
</feature>
<reference key="1">
    <citation type="journal article" date="2001" name="Brain Res. Mol. Brain Res.">
        <title>Radical fringe negatively modulates Notch signaling in postmitotic neurons of the rat brain.</title>
        <authorList>
            <person name="Mikami T."/>
            <person name="Ohnaka Y."/>
            <person name="Nakamura A."/>
            <person name="Kurosaka A."/>
            <person name="Itoh N."/>
        </authorList>
    </citation>
    <scope>NUCLEOTIDE SEQUENCE [MRNA]</scope>
    <scope>FUNCTION</scope>
    <scope>TISSUE SPECIFICITY</scope>
    <source>
        <strain>Wistar</strain>
    </source>
</reference>
<proteinExistence type="evidence at transcript level"/>
<protein>
    <recommendedName>
        <fullName evidence="6">Beta-1,3-N-acetylglucosaminyltransferase radical fringe</fullName>
        <ecNumber evidence="2">2.4.1.222</ecNumber>
    </recommendedName>
    <alternativeName>
        <fullName>O-fucosylpeptide 3-beta-N-acetylglucosaminyltransferase</fullName>
    </alternativeName>
</protein>
<organism>
    <name type="scientific">Rattus norvegicus</name>
    <name type="common">Rat</name>
    <dbReference type="NCBI Taxonomy" id="10116"/>
    <lineage>
        <taxon>Eukaryota</taxon>
        <taxon>Metazoa</taxon>
        <taxon>Chordata</taxon>
        <taxon>Craniata</taxon>
        <taxon>Vertebrata</taxon>
        <taxon>Euteleostomi</taxon>
        <taxon>Mammalia</taxon>
        <taxon>Eutheria</taxon>
        <taxon>Euarchontoglires</taxon>
        <taxon>Glires</taxon>
        <taxon>Rodentia</taxon>
        <taxon>Myomorpha</taxon>
        <taxon>Muroidea</taxon>
        <taxon>Muridae</taxon>
        <taxon>Murinae</taxon>
        <taxon>Rattus</taxon>
    </lineage>
</organism>
<evidence type="ECO:0000250" key="1"/>
<evidence type="ECO:0000250" key="2">
    <source>
        <dbReference type="UniProtKB" id="O09009"/>
    </source>
</evidence>
<evidence type="ECO:0000250" key="3">
    <source>
        <dbReference type="UniProtKB" id="O12972"/>
    </source>
</evidence>
<evidence type="ECO:0000255" key="4"/>
<evidence type="ECO:0000269" key="5">
    <source>
    </source>
</evidence>
<evidence type="ECO:0000305" key="6"/>
<evidence type="ECO:0000312" key="7">
    <source>
        <dbReference type="RGD" id="621322"/>
    </source>
</evidence>
<name>RFNG_RAT</name>
<gene>
    <name evidence="7" type="primary">Rfng</name>
</gene>